<protein>
    <recommendedName>
        <fullName>ATP-dependent RNA helicase DDX55</fullName>
        <ecNumber evidence="1">3.6.4.13</ecNumber>
    </recommendedName>
    <alternativeName>
        <fullName>DEAD box protein 55</fullName>
    </alternativeName>
</protein>
<keyword id="KW-0067">ATP-binding</keyword>
<keyword id="KW-0175">Coiled coil</keyword>
<keyword id="KW-0347">Helicase</keyword>
<keyword id="KW-0378">Hydrolase</keyword>
<keyword id="KW-0547">Nucleotide-binding</keyword>
<keyword id="KW-0539">Nucleus</keyword>
<keyword id="KW-1185">Reference proteome</keyword>
<keyword id="KW-0690">Ribosome biogenesis</keyword>
<keyword id="KW-0694">RNA-binding</keyword>
<keyword id="KW-0698">rRNA processing</keyword>
<keyword id="KW-0699">rRNA-binding</keyword>
<comment type="function">
    <text evidence="1">Probable ATP-binding RNA helicase. Has ATPase activity and is involved in the maturation of precursor large subunit rRNAs (By similarity).</text>
</comment>
<comment type="catalytic activity">
    <reaction evidence="1">
        <text>ATP + H2O = ADP + phosphate + H(+)</text>
        <dbReference type="Rhea" id="RHEA:13065"/>
        <dbReference type="ChEBI" id="CHEBI:15377"/>
        <dbReference type="ChEBI" id="CHEBI:15378"/>
        <dbReference type="ChEBI" id="CHEBI:30616"/>
        <dbReference type="ChEBI" id="CHEBI:43474"/>
        <dbReference type="ChEBI" id="CHEBI:456216"/>
        <dbReference type="EC" id="3.6.4.13"/>
    </reaction>
</comment>
<comment type="subunit">
    <text evidence="1">Interacts with 28S rRNA. Interacts with double-stranded RNA substrates in vitro; the interaction stimulates ATPase activity.</text>
</comment>
<comment type="subcellular location">
    <subcellularLocation>
        <location evidence="1">Nucleus</location>
        <location evidence="1">Nucleoplasm</location>
    </subcellularLocation>
</comment>
<comment type="domain">
    <text>The Q motif is unique to and characteristic of the DEAD box family of RNA helicases and controls ATP binding and hydrolysis.</text>
</comment>
<comment type="domain">
    <text evidence="1">The C-terminal region is required for DDX55 nuclear import and association with pre-ribosomal complexes.</text>
</comment>
<comment type="similarity">
    <text evidence="6">Belongs to the DEAD box helicase family. DDX55/SPB4 subfamily.</text>
</comment>
<accession>Q6AZV7</accession>
<gene>
    <name type="primary">ddx55</name>
</gene>
<reference key="1">
    <citation type="submission" date="2004-07" db="EMBL/GenBank/DDBJ databases">
        <authorList>
            <consortium name="NIH - Xenopus Gene Collection (XGC) project"/>
        </authorList>
    </citation>
    <scope>NUCLEOTIDE SEQUENCE [LARGE SCALE MRNA]</scope>
    <source>
        <tissue>Embryo</tissue>
    </source>
</reference>
<sequence>MENVTEGTWDSLPQKLNGSIRRTLEELKFTHMTPVQSATIPLFMNNKDIAAEAITGSGKTLAFVIPLLEILLKREEKLKKNQVGALIITPTRELAVQIDEVLSCFTKHFPQFSQILLIGGSNPVDDVRKFKEHGGNIIVATPGRLEDMFRRQADGLDLVICVKTLDVLILDEADRLLDMGFEASINTILGFLPKQRRTGLFSATQTQELENLVRAGLRNPVRIAVKEKGVAATSTQKTPIRLQNYYMICKADEKFNKLIAFLQKRKQEKHLVFFSTCACVEYYGKALEMLLKPVKVMCIHGKMKHKRNRIFTEFRKINSGILVCTDVMARGIDIHEVNWVVQYDPPSSASAFVHRCGRTARIGHHGSALVFLLPMEESYVSFLSINQKCPLQEMTELIISVDLLPKLKAMAETDRAVFEKGMKAFVSYVQAYAKHECNLIFRVKDLDFSSLARGFGLLRMPRMPELKGKNFSDFVSTLIDTDSIAYKDKNREKQRQKMLKERKEKLETEGRKHFAKNKAWSKQKARKEKKQKVALKRKKEEGSDIDEGDVDELLQDTRLLKRLKKGKITEEEFEKQLTAVGGKSEVEEGSEDSN</sequence>
<organism>
    <name type="scientific">Xenopus laevis</name>
    <name type="common">African clawed frog</name>
    <dbReference type="NCBI Taxonomy" id="8355"/>
    <lineage>
        <taxon>Eukaryota</taxon>
        <taxon>Metazoa</taxon>
        <taxon>Chordata</taxon>
        <taxon>Craniata</taxon>
        <taxon>Vertebrata</taxon>
        <taxon>Euteleostomi</taxon>
        <taxon>Amphibia</taxon>
        <taxon>Batrachia</taxon>
        <taxon>Anura</taxon>
        <taxon>Pipoidea</taxon>
        <taxon>Pipidae</taxon>
        <taxon>Xenopodinae</taxon>
        <taxon>Xenopus</taxon>
        <taxon>Xenopus</taxon>
    </lineage>
</organism>
<evidence type="ECO:0000250" key="1">
    <source>
        <dbReference type="UniProtKB" id="Q8NHQ9"/>
    </source>
</evidence>
<evidence type="ECO:0000255" key="2"/>
<evidence type="ECO:0000255" key="3">
    <source>
        <dbReference type="PROSITE-ProRule" id="PRU00541"/>
    </source>
</evidence>
<evidence type="ECO:0000255" key="4">
    <source>
        <dbReference type="PROSITE-ProRule" id="PRU00542"/>
    </source>
</evidence>
<evidence type="ECO:0000256" key="5">
    <source>
        <dbReference type="SAM" id="MobiDB-lite"/>
    </source>
</evidence>
<evidence type="ECO:0000305" key="6"/>
<proteinExistence type="evidence at transcript level"/>
<feature type="chain" id="PRO_0000252214" description="ATP-dependent RNA helicase DDX55">
    <location>
        <begin position="1"/>
        <end position="594"/>
    </location>
</feature>
<feature type="domain" description="Helicase ATP-binding" evidence="3">
    <location>
        <begin position="40"/>
        <end position="223"/>
    </location>
</feature>
<feature type="domain" description="Helicase C-terminal" evidence="4">
    <location>
        <begin position="254"/>
        <end position="411"/>
    </location>
</feature>
<feature type="region of interest" description="Disordered" evidence="5">
    <location>
        <begin position="502"/>
        <end position="548"/>
    </location>
</feature>
<feature type="region of interest" description="Important for nuclear localization" evidence="1">
    <location>
        <begin position="532"/>
        <end position="561"/>
    </location>
</feature>
<feature type="coiled-coil region" evidence="2">
    <location>
        <begin position="486"/>
        <end position="542"/>
    </location>
</feature>
<feature type="short sequence motif" description="Q motif">
    <location>
        <begin position="9"/>
        <end position="37"/>
    </location>
</feature>
<feature type="short sequence motif" description="DEAD box">
    <location>
        <begin position="171"/>
        <end position="174"/>
    </location>
</feature>
<feature type="compositionally biased region" description="Basic and acidic residues" evidence="5">
    <location>
        <begin position="502"/>
        <end position="512"/>
    </location>
</feature>
<feature type="compositionally biased region" description="Basic residues" evidence="5">
    <location>
        <begin position="513"/>
        <end position="537"/>
    </location>
</feature>
<feature type="binding site" evidence="3">
    <location>
        <begin position="53"/>
        <end position="60"/>
    </location>
    <ligand>
        <name>ATP</name>
        <dbReference type="ChEBI" id="CHEBI:30616"/>
    </ligand>
</feature>
<name>DDX55_XENLA</name>
<dbReference type="EC" id="3.6.4.13" evidence="1"/>
<dbReference type="EMBL" id="BC077172">
    <property type="protein sequence ID" value="AAH77172.1"/>
    <property type="molecule type" value="mRNA"/>
</dbReference>
<dbReference type="RefSeq" id="NP_001086608.1">
    <property type="nucleotide sequence ID" value="NM_001093139.1"/>
</dbReference>
<dbReference type="SMR" id="Q6AZV7"/>
<dbReference type="BioGRID" id="103303">
    <property type="interactions" value="1"/>
</dbReference>
<dbReference type="IntAct" id="Q6AZV7">
    <property type="interactions" value="1"/>
</dbReference>
<dbReference type="DNASU" id="446443"/>
<dbReference type="GeneID" id="446443"/>
<dbReference type="KEGG" id="xla:446443"/>
<dbReference type="AGR" id="Xenbase:XB-GENE-972465"/>
<dbReference type="CTD" id="446443"/>
<dbReference type="Xenbase" id="XB-GENE-972465">
    <property type="gene designation" value="ddx55.S"/>
</dbReference>
<dbReference type="OMA" id="AYKEHEC"/>
<dbReference type="OrthoDB" id="7396459at2759"/>
<dbReference type="Proteomes" id="UP000186698">
    <property type="component" value="Chromosome 1S"/>
</dbReference>
<dbReference type="Bgee" id="446443">
    <property type="expression patterns" value="Expressed in egg cell and 19 other cell types or tissues"/>
</dbReference>
<dbReference type="GO" id="GO:0005730">
    <property type="term" value="C:nucleolus"/>
    <property type="evidence" value="ECO:0000318"/>
    <property type="project" value="GO_Central"/>
</dbReference>
<dbReference type="GO" id="GO:0005524">
    <property type="term" value="F:ATP binding"/>
    <property type="evidence" value="ECO:0007669"/>
    <property type="project" value="UniProtKB-KW"/>
</dbReference>
<dbReference type="GO" id="GO:0016887">
    <property type="term" value="F:ATP hydrolysis activity"/>
    <property type="evidence" value="ECO:0007669"/>
    <property type="project" value="RHEA"/>
</dbReference>
<dbReference type="GO" id="GO:0003723">
    <property type="term" value="F:RNA binding"/>
    <property type="evidence" value="ECO:0007669"/>
    <property type="project" value="UniProtKB-KW"/>
</dbReference>
<dbReference type="GO" id="GO:0003724">
    <property type="term" value="F:RNA helicase activity"/>
    <property type="evidence" value="ECO:0007669"/>
    <property type="project" value="UniProtKB-EC"/>
</dbReference>
<dbReference type="CDD" id="cd17960">
    <property type="entry name" value="DEADc_DDX55"/>
    <property type="match status" value="1"/>
</dbReference>
<dbReference type="CDD" id="cd18787">
    <property type="entry name" value="SF2_C_DEAD"/>
    <property type="match status" value="1"/>
</dbReference>
<dbReference type="FunFam" id="3.40.50.300:FF:000877">
    <property type="entry name" value="RNA helicase"/>
    <property type="match status" value="1"/>
</dbReference>
<dbReference type="FunFam" id="3.40.50.300:FF:001022">
    <property type="entry name" value="RNA helicase"/>
    <property type="match status" value="1"/>
</dbReference>
<dbReference type="Gene3D" id="3.40.50.300">
    <property type="entry name" value="P-loop containing nucleotide triphosphate hydrolases"/>
    <property type="match status" value="2"/>
</dbReference>
<dbReference type="InterPro" id="IPR011545">
    <property type="entry name" value="DEAD/DEAH_box_helicase_dom"/>
</dbReference>
<dbReference type="InterPro" id="IPR014001">
    <property type="entry name" value="Helicase_ATP-bd"/>
</dbReference>
<dbReference type="InterPro" id="IPR001650">
    <property type="entry name" value="Helicase_C-like"/>
</dbReference>
<dbReference type="InterPro" id="IPR027417">
    <property type="entry name" value="P-loop_NTPase"/>
</dbReference>
<dbReference type="InterPro" id="IPR000629">
    <property type="entry name" value="RNA-helicase_DEAD-box_CS"/>
</dbReference>
<dbReference type="InterPro" id="IPR025313">
    <property type="entry name" value="SPB4-like_CTE"/>
</dbReference>
<dbReference type="PANTHER" id="PTHR24031">
    <property type="entry name" value="RNA HELICASE"/>
    <property type="match status" value="1"/>
</dbReference>
<dbReference type="Pfam" id="PF13959">
    <property type="entry name" value="CTE_SPB4"/>
    <property type="match status" value="1"/>
</dbReference>
<dbReference type="Pfam" id="PF00270">
    <property type="entry name" value="DEAD"/>
    <property type="match status" value="1"/>
</dbReference>
<dbReference type="Pfam" id="PF00271">
    <property type="entry name" value="Helicase_C"/>
    <property type="match status" value="1"/>
</dbReference>
<dbReference type="SMART" id="SM00487">
    <property type="entry name" value="DEXDc"/>
    <property type="match status" value="1"/>
</dbReference>
<dbReference type="SMART" id="SM01178">
    <property type="entry name" value="DUF4217"/>
    <property type="match status" value="1"/>
</dbReference>
<dbReference type="SMART" id="SM00490">
    <property type="entry name" value="HELICc"/>
    <property type="match status" value="1"/>
</dbReference>
<dbReference type="SUPFAM" id="SSF52540">
    <property type="entry name" value="P-loop containing nucleoside triphosphate hydrolases"/>
    <property type="match status" value="1"/>
</dbReference>
<dbReference type="PROSITE" id="PS00039">
    <property type="entry name" value="DEAD_ATP_HELICASE"/>
    <property type="match status" value="1"/>
</dbReference>
<dbReference type="PROSITE" id="PS51192">
    <property type="entry name" value="HELICASE_ATP_BIND_1"/>
    <property type="match status" value="1"/>
</dbReference>
<dbReference type="PROSITE" id="PS51194">
    <property type="entry name" value="HELICASE_CTER"/>
    <property type="match status" value="1"/>
</dbReference>
<dbReference type="PROSITE" id="PS51195">
    <property type="entry name" value="Q_MOTIF"/>
    <property type="match status" value="1"/>
</dbReference>